<gene>
    <name evidence="1" type="primary">rplC</name>
    <name type="ordered locus">Acel_0306</name>
</gene>
<name>RL3_ACIC1</name>
<evidence type="ECO:0000255" key="1">
    <source>
        <dbReference type="HAMAP-Rule" id="MF_01325"/>
    </source>
</evidence>
<evidence type="ECO:0000256" key="2">
    <source>
        <dbReference type="SAM" id="MobiDB-lite"/>
    </source>
</evidence>
<evidence type="ECO:0000305" key="3"/>
<proteinExistence type="inferred from homology"/>
<accession>A0LRM0</accession>
<reference key="1">
    <citation type="journal article" date="2009" name="Genome Res.">
        <title>Complete genome of the cellulolytic thermophile Acidothermus cellulolyticus 11B provides insights into its ecophysiological and evolutionary adaptations.</title>
        <authorList>
            <person name="Barabote R.D."/>
            <person name="Xie G."/>
            <person name="Leu D.H."/>
            <person name="Normand P."/>
            <person name="Necsulea A."/>
            <person name="Daubin V."/>
            <person name="Medigue C."/>
            <person name="Adney W.S."/>
            <person name="Xu X.C."/>
            <person name="Lapidus A."/>
            <person name="Parales R.E."/>
            <person name="Detter C."/>
            <person name="Pujic P."/>
            <person name="Bruce D."/>
            <person name="Lavire C."/>
            <person name="Challacombe J.F."/>
            <person name="Brettin T.S."/>
            <person name="Berry A.M."/>
        </authorList>
    </citation>
    <scope>NUCLEOTIDE SEQUENCE [LARGE SCALE GENOMIC DNA]</scope>
    <source>
        <strain>ATCC 43068 / DSM 8971 / 11B</strain>
    </source>
</reference>
<comment type="function">
    <text evidence="1">One of the primary rRNA binding proteins, it binds directly near the 3'-end of the 23S rRNA, where it nucleates assembly of the 50S subunit.</text>
</comment>
<comment type="subunit">
    <text evidence="1">Part of the 50S ribosomal subunit. Forms a cluster with proteins L14 and L19.</text>
</comment>
<comment type="similarity">
    <text evidence="1">Belongs to the universal ribosomal protein uL3 family.</text>
</comment>
<feature type="chain" id="PRO_0000353590" description="Large ribosomal subunit protein uL3">
    <location>
        <begin position="1"/>
        <end position="222"/>
    </location>
</feature>
<feature type="region of interest" description="Disordered" evidence="2">
    <location>
        <begin position="129"/>
        <end position="150"/>
    </location>
</feature>
<keyword id="KW-1185">Reference proteome</keyword>
<keyword id="KW-0687">Ribonucleoprotein</keyword>
<keyword id="KW-0689">Ribosomal protein</keyword>
<keyword id="KW-0694">RNA-binding</keyword>
<keyword id="KW-0699">rRNA-binding</keyword>
<protein>
    <recommendedName>
        <fullName evidence="1">Large ribosomal subunit protein uL3</fullName>
    </recommendedName>
    <alternativeName>
        <fullName evidence="3">50S ribosomal protein L3</fullName>
    </alternativeName>
</protein>
<sequence length="222" mass="23478">MPKQVKGLLGEKLGMTQVFDESGRVIPVTVVRAGPCVVTQVRTPDRDGYSAVQLGYGAVDPRRVNKPLAGHFRAAGVTPRRYLAEVRTGDAAEYTVGQEVTVEIFTPGQRVDVAGVSKGKGFAGLMKRHNFRGLPDSHGTERKHRSPGSIGACATPGRVFKGLRMAGRMGGRRVTVQNLAVQAVKPEENLLLLQGAVPGPNGGLVYVRTAAKGKANRDGGAA</sequence>
<organism>
    <name type="scientific">Acidothermus cellulolyticus (strain ATCC 43068 / DSM 8971 / 11B)</name>
    <dbReference type="NCBI Taxonomy" id="351607"/>
    <lineage>
        <taxon>Bacteria</taxon>
        <taxon>Bacillati</taxon>
        <taxon>Actinomycetota</taxon>
        <taxon>Actinomycetes</taxon>
        <taxon>Acidothermales</taxon>
        <taxon>Acidothermaceae</taxon>
        <taxon>Acidothermus</taxon>
    </lineage>
</organism>
<dbReference type="EMBL" id="CP000481">
    <property type="protein sequence ID" value="ABK52080.1"/>
    <property type="molecule type" value="Genomic_DNA"/>
</dbReference>
<dbReference type="SMR" id="A0LRM0"/>
<dbReference type="FunCoup" id="A0LRM0">
    <property type="interactions" value="379"/>
</dbReference>
<dbReference type="STRING" id="351607.Acel_0306"/>
<dbReference type="KEGG" id="ace:Acel_0306"/>
<dbReference type="eggNOG" id="COG0087">
    <property type="taxonomic scope" value="Bacteria"/>
</dbReference>
<dbReference type="HOGENOM" id="CLU_044142_4_1_11"/>
<dbReference type="InParanoid" id="A0LRM0"/>
<dbReference type="OrthoDB" id="9806135at2"/>
<dbReference type="Proteomes" id="UP000008221">
    <property type="component" value="Chromosome"/>
</dbReference>
<dbReference type="GO" id="GO:0022625">
    <property type="term" value="C:cytosolic large ribosomal subunit"/>
    <property type="evidence" value="ECO:0007669"/>
    <property type="project" value="TreeGrafter"/>
</dbReference>
<dbReference type="GO" id="GO:0019843">
    <property type="term" value="F:rRNA binding"/>
    <property type="evidence" value="ECO:0007669"/>
    <property type="project" value="UniProtKB-UniRule"/>
</dbReference>
<dbReference type="GO" id="GO:0003735">
    <property type="term" value="F:structural constituent of ribosome"/>
    <property type="evidence" value="ECO:0007669"/>
    <property type="project" value="InterPro"/>
</dbReference>
<dbReference type="GO" id="GO:0006412">
    <property type="term" value="P:translation"/>
    <property type="evidence" value="ECO:0007669"/>
    <property type="project" value="UniProtKB-UniRule"/>
</dbReference>
<dbReference type="FunFam" id="2.40.30.10:FF:000004">
    <property type="entry name" value="50S ribosomal protein L3"/>
    <property type="match status" value="1"/>
</dbReference>
<dbReference type="FunFam" id="3.30.160.810:FF:000001">
    <property type="entry name" value="50S ribosomal protein L3"/>
    <property type="match status" value="1"/>
</dbReference>
<dbReference type="Gene3D" id="3.30.160.810">
    <property type="match status" value="1"/>
</dbReference>
<dbReference type="Gene3D" id="2.40.30.10">
    <property type="entry name" value="Translation factors"/>
    <property type="match status" value="1"/>
</dbReference>
<dbReference type="HAMAP" id="MF_01325_B">
    <property type="entry name" value="Ribosomal_uL3_B"/>
    <property type="match status" value="1"/>
</dbReference>
<dbReference type="InterPro" id="IPR000597">
    <property type="entry name" value="Ribosomal_uL3"/>
</dbReference>
<dbReference type="InterPro" id="IPR019927">
    <property type="entry name" value="Ribosomal_uL3_bac/org-type"/>
</dbReference>
<dbReference type="InterPro" id="IPR019926">
    <property type="entry name" value="Ribosomal_uL3_CS"/>
</dbReference>
<dbReference type="InterPro" id="IPR009000">
    <property type="entry name" value="Transl_B-barrel_sf"/>
</dbReference>
<dbReference type="NCBIfam" id="TIGR03625">
    <property type="entry name" value="L3_bact"/>
    <property type="match status" value="1"/>
</dbReference>
<dbReference type="PANTHER" id="PTHR11229">
    <property type="entry name" value="50S RIBOSOMAL PROTEIN L3"/>
    <property type="match status" value="1"/>
</dbReference>
<dbReference type="PANTHER" id="PTHR11229:SF16">
    <property type="entry name" value="LARGE RIBOSOMAL SUBUNIT PROTEIN UL3C"/>
    <property type="match status" value="1"/>
</dbReference>
<dbReference type="Pfam" id="PF00297">
    <property type="entry name" value="Ribosomal_L3"/>
    <property type="match status" value="1"/>
</dbReference>
<dbReference type="SUPFAM" id="SSF50447">
    <property type="entry name" value="Translation proteins"/>
    <property type="match status" value="1"/>
</dbReference>
<dbReference type="PROSITE" id="PS00474">
    <property type="entry name" value="RIBOSOMAL_L3"/>
    <property type="match status" value="1"/>
</dbReference>